<keyword id="KW-0378">Hydrolase</keyword>
<keyword id="KW-0479">Metal-binding</keyword>
<keyword id="KW-0482">Metalloprotease</keyword>
<keyword id="KW-0645">Protease</keyword>
<keyword id="KW-1185">Reference proteome</keyword>
<keyword id="KW-0862">Zinc</keyword>
<feature type="chain" id="PRO_1000001659" description="UPF0758 protein Hhal_2301">
    <location>
        <begin position="1"/>
        <end position="224"/>
    </location>
</feature>
<feature type="domain" description="MPN" evidence="1">
    <location>
        <begin position="102"/>
        <end position="224"/>
    </location>
</feature>
<feature type="short sequence motif" description="JAMM motif" evidence="1">
    <location>
        <begin position="173"/>
        <end position="186"/>
    </location>
</feature>
<feature type="binding site" evidence="1">
    <location>
        <position position="173"/>
    </location>
    <ligand>
        <name>Zn(2+)</name>
        <dbReference type="ChEBI" id="CHEBI:29105"/>
        <note>catalytic</note>
    </ligand>
</feature>
<feature type="binding site" evidence="1">
    <location>
        <position position="175"/>
    </location>
    <ligand>
        <name>Zn(2+)</name>
        <dbReference type="ChEBI" id="CHEBI:29105"/>
        <note>catalytic</note>
    </ligand>
</feature>
<feature type="binding site" evidence="1">
    <location>
        <position position="186"/>
    </location>
    <ligand>
        <name>Zn(2+)</name>
        <dbReference type="ChEBI" id="CHEBI:29105"/>
        <note>catalytic</note>
    </ligand>
</feature>
<protein>
    <recommendedName>
        <fullName>UPF0758 protein Hhal_2301</fullName>
    </recommendedName>
</protein>
<proteinExistence type="inferred from homology"/>
<accession>A1WZF2</accession>
<evidence type="ECO:0000255" key="1">
    <source>
        <dbReference type="PROSITE-ProRule" id="PRU01182"/>
    </source>
</evidence>
<evidence type="ECO:0000305" key="2"/>
<comment type="similarity">
    <text evidence="2">Belongs to the UPF0758 family.</text>
</comment>
<dbReference type="EMBL" id="CP000544">
    <property type="protein sequence ID" value="ABM63064.1"/>
    <property type="molecule type" value="Genomic_DNA"/>
</dbReference>
<dbReference type="RefSeq" id="WP_011815086.1">
    <property type="nucleotide sequence ID" value="NC_008789.1"/>
</dbReference>
<dbReference type="SMR" id="A1WZF2"/>
<dbReference type="STRING" id="349124.Hhal_2301"/>
<dbReference type="KEGG" id="hha:Hhal_2301"/>
<dbReference type="eggNOG" id="COG2003">
    <property type="taxonomic scope" value="Bacteria"/>
</dbReference>
<dbReference type="HOGENOM" id="CLU_073529_0_1_6"/>
<dbReference type="OrthoDB" id="9804482at2"/>
<dbReference type="Proteomes" id="UP000000647">
    <property type="component" value="Chromosome"/>
</dbReference>
<dbReference type="GO" id="GO:0046872">
    <property type="term" value="F:metal ion binding"/>
    <property type="evidence" value="ECO:0007669"/>
    <property type="project" value="UniProtKB-KW"/>
</dbReference>
<dbReference type="GO" id="GO:0008237">
    <property type="term" value="F:metallopeptidase activity"/>
    <property type="evidence" value="ECO:0007669"/>
    <property type="project" value="UniProtKB-KW"/>
</dbReference>
<dbReference type="GO" id="GO:0006508">
    <property type="term" value="P:proteolysis"/>
    <property type="evidence" value="ECO:0007669"/>
    <property type="project" value="UniProtKB-KW"/>
</dbReference>
<dbReference type="CDD" id="cd08071">
    <property type="entry name" value="MPN_DUF2466"/>
    <property type="match status" value="1"/>
</dbReference>
<dbReference type="Gene3D" id="3.40.140.10">
    <property type="entry name" value="Cytidine Deaminase, domain 2"/>
    <property type="match status" value="1"/>
</dbReference>
<dbReference type="InterPro" id="IPR037518">
    <property type="entry name" value="MPN"/>
</dbReference>
<dbReference type="InterPro" id="IPR025657">
    <property type="entry name" value="RadC_JAB"/>
</dbReference>
<dbReference type="InterPro" id="IPR010994">
    <property type="entry name" value="RuvA_2-like"/>
</dbReference>
<dbReference type="InterPro" id="IPR001405">
    <property type="entry name" value="UPF0758"/>
</dbReference>
<dbReference type="InterPro" id="IPR020891">
    <property type="entry name" value="UPF0758_CS"/>
</dbReference>
<dbReference type="InterPro" id="IPR046778">
    <property type="entry name" value="UPF0758_N"/>
</dbReference>
<dbReference type="NCBIfam" id="NF000642">
    <property type="entry name" value="PRK00024.1"/>
    <property type="match status" value="1"/>
</dbReference>
<dbReference type="NCBIfam" id="TIGR00608">
    <property type="entry name" value="radc"/>
    <property type="match status" value="1"/>
</dbReference>
<dbReference type="PANTHER" id="PTHR30471">
    <property type="entry name" value="DNA REPAIR PROTEIN RADC"/>
    <property type="match status" value="1"/>
</dbReference>
<dbReference type="PANTHER" id="PTHR30471:SF3">
    <property type="entry name" value="UPF0758 PROTEIN YEES-RELATED"/>
    <property type="match status" value="1"/>
</dbReference>
<dbReference type="Pfam" id="PF04002">
    <property type="entry name" value="RadC"/>
    <property type="match status" value="1"/>
</dbReference>
<dbReference type="Pfam" id="PF20582">
    <property type="entry name" value="UPF0758_N"/>
    <property type="match status" value="1"/>
</dbReference>
<dbReference type="SUPFAM" id="SSF102712">
    <property type="entry name" value="JAB1/MPN domain"/>
    <property type="match status" value="1"/>
</dbReference>
<dbReference type="SUPFAM" id="SSF47781">
    <property type="entry name" value="RuvA domain 2-like"/>
    <property type="match status" value="1"/>
</dbReference>
<dbReference type="PROSITE" id="PS50249">
    <property type="entry name" value="MPN"/>
    <property type="match status" value="1"/>
</dbReference>
<dbReference type="PROSITE" id="PS01302">
    <property type="entry name" value="UPF0758"/>
    <property type="match status" value="1"/>
</dbReference>
<sequence>MSIRSWPREERPRERLIQRGPQALSDAELLAIFLRTGRRGQSAVELARELLAAFSGLRGLLEADRETFAARPGLGDAKYAQMQAALEIARRHLGEQLQRGPTLSSPAQTRTYLAALLRDHPSEVFGGLFLDNRHRVIGFEELFRGTINGASVYPRELVRRALAHNAAAVIVAHNHPSGITEPSAADEALTHRLREALGLVDVRLLDHFVVGDGEPVSLAERGVL</sequence>
<name>Y2301_HALHL</name>
<gene>
    <name type="ordered locus">Hhal_2301</name>
</gene>
<organism>
    <name type="scientific">Halorhodospira halophila (strain DSM 244 / SL1)</name>
    <name type="common">Ectothiorhodospira halophila (strain DSM 244 / SL1)</name>
    <dbReference type="NCBI Taxonomy" id="349124"/>
    <lineage>
        <taxon>Bacteria</taxon>
        <taxon>Pseudomonadati</taxon>
        <taxon>Pseudomonadota</taxon>
        <taxon>Gammaproteobacteria</taxon>
        <taxon>Chromatiales</taxon>
        <taxon>Ectothiorhodospiraceae</taxon>
        <taxon>Halorhodospira</taxon>
    </lineage>
</organism>
<reference key="1">
    <citation type="submission" date="2006-12" db="EMBL/GenBank/DDBJ databases">
        <title>Complete sequence of Halorhodospira halophila SL1.</title>
        <authorList>
            <consortium name="US DOE Joint Genome Institute"/>
            <person name="Copeland A."/>
            <person name="Lucas S."/>
            <person name="Lapidus A."/>
            <person name="Barry K."/>
            <person name="Detter J.C."/>
            <person name="Glavina del Rio T."/>
            <person name="Hammon N."/>
            <person name="Israni S."/>
            <person name="Dalin E."/>
            <person name="Tice H."/>
            <person name="Pitluck S."/>
            <person name="Saunders E."/>
            <person name="Brettin T."/>
            <person name="Bruce D."/>
            <person name="Han C."/>
            <person name="Tapia R."/>
            <person name="Schmutz J."/>
            <person name="Larimer F."/>
            <person name="Land M."/>
            <person name="Hauser L."/>
            <person name="Kyrpides N."/>
            <person name="Mikhailova N."/>
            <person name="Hoff W."/>
            <person name="Richardson P."/>
        </authorList>
    </citation>
    <scope>NUCLEOTIDE SEQUENCE [LARGE SCALE GENOMIC DNA]</scope>
    <source>
        <strain>DSM 244 / SL1</strain>
    </source>
</reference>